<comment type="function">
    <text evidence="1">Involved in the glycolate utilization. Catalyzes the condensation and subsequent hydrolysis of acetyl-coenzyme A (acetyl-CoA) and glyoxylate to form malate and CoA.</text>
</comment>
<comment type="catalytic activity">
    <reaction evidence="1">
        <text>glyoxylate + acetyl-CoA + H2O = (S)-malate + CoA + H(+)</text>
        <dbReference type="Rhea" id="RHEA:18181"/>
        <dbReference type="ChEBI" id="CHEBI:15377"/>
        <dbReference type="ChEBI" id="CHEBI:15378"/>
        <dbReference type="ChEBI" id="CHEBI:15589"/>
        <dbReference type="ChEBI" id="CHEBI:36655"/>
        <dbReference type="ChEBI" id="CHEBI:57287"/>
        <dbReference type="ChEBI" id="CHEBI:57288"/>
        <dbReference type="EC" id="2.3.3.9"/>
    </reaction>
</comment>
<comment type="cofactor">
    <cofactor evidence="1">
        <name>Mg(2+)</name>
        <dbReference type="ChEBI" id="CHEBI:18420"/>
    </cofactor>
</comment>
<comment type="pathway">
    <text evidence="1">Carbohydrate metabolism; glyoxylate cycle; (S)-malate from isocitrate: step 2/2.</text>
</comment>
<comment type="subunit">
    <text evidence="1">Monomer.</text>
</comment>
<comment type="subcellular location">
    <subcellularLocation>
        <location evidence="1">Cytoplasm</location>
    </subcellularLocation>
</comment>
<comment type="similarity">
    <text evidence="1">Belongs to the malate synthase family. GlcB subfamily.</text>
</comment>
<dbReference type="EC" id="2.3.3.9" evidence="1"/>
<dbReference type="EMBL" id="CP000438">
    <property type="protein sequence ID" value="ABJ15447.1"/>
    <property type="molecule type" value="Genomic_DNA"/>
</dbReference>
<dbReference type="RefSeq" id="WP_003105217.1">
    <property type="nucleotide sequence ID" value="NZ_CP034244.1"/>
</dbReference>
<dbReference type="SMR" id="Q02TT1"/>
<dbReference type="KEGG" id="pau:PA14_06290"/>
<dbReference type="PseudoCAP" id="PA14_06290"/>
<dbReference type="HOGENOM" id="CLU_028446_1_0_6"/>
<dbReference type="BioCyc" id="PAER208963:G1G74-522-MONOMER"/>
<dbReference type="UniPathway" id="UPA00703">
    <property type="reaction ID" value="UER00720"/>
</dbReference>
<dbReference type="Proteomes" id="UP000000653">
    <property type="component" value="Chromosome"/>
</dbReference>
<dbReference type="GO" id="GO:0005829">
    <property type="term" value="C:cytosol"/>
    <property type="evidence" value="ECO:0007669"/>
    <property type="project" value="TreeGrafter"/>
</dbReference>
<dbReference type="GO" id="GO:0000287">
    <property type="term" value="F:magnesium ion binding"/>
    <property type="evidence" value="ECO:0007669"/>
    <property type="project" value="TreeGrafter"/>
</dbReference>
<dbReference type="GO" id="GO:0004474">
    <property type="term" value="F:malate synthase activity"/>
    <property type="evidence" value="ECO:0007669"/>
    <property type="project" value="UniProtKB-UniRule"/>
</dbReference>
<dbReference type="GO" id="GO:0009436">
    <property type="term" value="P:glyoxylate catabolic process"/>
    <property type="evidence" value="ECO:0007669"/>
    <property type="project" value="TreeGrafter"/>
</dbReference>
<dbReference type="GO" id="GO:0006097">
    <property type="term" value="P:glyoxylate cycle"/>
    <property type="evidence" value="ECO:0007669"/>
    <property type="project" value="UniProtKB-UniRule"/>
</dbReference>
<dbReference type="GO" id="GO:0006099">
    <property type="term" value="P:tricarboxylic acid cycle"/>
    <property type="evidence" value="ECO:0007669"/>
    <property type="project" value="UniProtKB-KW"/>
</dbReference>
<dbReference type="CDD" id="cd00728">
    <property type="entry name" value="malate_synt_G"/>
    <property type="match status" value="1"/>
</dbReference>
<dbReference type="FunFam" id="3.20.20.360:FF:000002">
    <property type="entry name" value="Malate synthase G"/>
    <property type="match status" value="1"/>
</dbReference>
<dbReference type="Gene3D" id="3.20.20.360">
    <property type="entry name" value="Malate synthase, domain 3"/>
    <property type="match status" value="2"/>
</dbReference>
<dbReference type="Gene3D" id="1.20.1220.12">
    <property type="entry name" value="Malate synthase, domain III"/>
    <property type="match status" value="1"/>
</dbReference>
<dbReference type="HAMAP" id="MF_00641">
    <property type="entry name" value="Malate_synth_G"/>
    <property type="match status" value="1"/>
</dbReference>
<dbReference type="InterPro" id="IPR044856">
    <property type="entry name" value="Malate_synth_C_sf"/>
</dbReference>
<dbReference type="InterPro" id="IPR011076">
    <property type="entry name" value="Malate_synth_sf"/>
</dbReference>
<dbReference type="InterPro" id="IPR001465">
    <property type="entry name" value="Malate_synthase_TIM"/>
</dbReference>
<dbReference type="InterPro" id="IPR006253">
    <property type="entry name" value="Malate_synthG"/>
</dbReference>
<dbReference type="InterPro" id="IPR048355">
    <property type="entry name" value="MS_C"/>
</dbReference>
<dbReference type="InterPro" id="IPR048356">
    <property type="entry name" value="MS_N"/>
</dbReference>
<dbReference type="InterPro" id="IPR046363">
    <property type="entry name" value="MS_N_TIM-barrel_dom"/>
</dbReference>
<dbReference type="InterPro" id="IPR048357">
    <property type="entry name" value="MSG_insertion"/>
</dbReference>
<dbReference type="NCBIfam" id="TIGR01345">
    <property type="entry name" value="malate_syn_G"/>
    <property type="match status" value="1"/>
</dbReference>
<dbReference type="NCBIfam" id="NF002825">
    <property type="entry name" value="PRK02999.1"/>
    <property type="match status" value="1"/>
</dbReference>
<dbReference type="PANTHER" id="PTHR42739">
    <property type="entry name" value="MALATE SYNTHASE G"/>
    <property type="match status" value="1"/>
</dbReference>
<dbReference type="PANTHER" id="PTHR42739:SF1">
    <property type="entry name" value="MALATE SYNTHASE G"/>
    <property type="match status" value="1"/>
</dbReference>
<dbReference type="Pfam" id="PF20659">
    <property type="entry name" value="MS_C"/>
    <property type="match status" value="1"/>
</dbReference>
<dbReference type="Pfam" id="PF20656">
    <property type="entry name" value="MS_N"/>
    <property type="match status" value="1"/>
</dbReference>
<dbReference type="Pfam" id="PF01274">
    <property type="entry name" value="MS_TIM-barrel"/>
    <property type="match status" value="1"/>
</dbReference>
<dbReference type="Pfam" id="PF20658">
    <property type="entry name" value="MSG_insertion"/>
    <property type="match status" value="1"/>
</dbReference>
<dbReference type="SUPFAM" id="SSF51645">
    <property type="entry name" value="Malate synthase G"/>
    <property type="match status" value="1"/>
</dbReference>
<proteinExistence type="inferred from homology"/>
<organism>
    <name type="scientific">Pseudomonas aeruginosa (strain UCBPP-PA14)</name>
    <dbReference type="NCBI Taxonomy" id="208963"/>
    <lineage>
        <taxon>Bacteria</taxon>
        <taxon>Pseudomonadati</taxon>
        <taxon>Pseudomonadota</taxon>
        <taxon>Gammaproteobacteria</taxon>
        <taxon>Pseudomonadales</taxon>
        <taxon>Pseudomonadaceae</taxon>
        <taxon>Pseudomonas</taxon>
    </lineage>
</organism>
<evidence type="ECO:0000255" key="1">
    <source>
        <dbReference type="HAMAP-Rule" id="MF_00641"/>
    </source>
</evidence>
<keyword id="KW-0963">Cytoplasm</keyword>
<keyword id="KW-0329">Glyoxylate bypass</keyword>
<keyword id="KW-0460">Magnesium</keyword>
<keyword id="KW-0479">Metal-binding</keyword>
<keyword id="KW-0558">Oxidation</keyword>
<keyword id="KW-0808">Transferase</keyword>
<keyword id="KW-0816">Tricarboxylic acid cycle</keyword>
<sequence>MTERVQVGGLQVAKVLFDFVNNEAIPGTGVSADTFWTGAEAVINDLAPKNKALLAKRDELQAKIDGWHQARAGQAHDAAAYKAFLEEIGYLLPEAEDFQAGTQNVDDEIARMAGPQLVVPVMNARFALNASNARWGSLYDALYGTDVISEEGGAEKGKGYNKVRGDKVIAFARAFLDEAAPLESGSHVDATSYSVKNGALVVALKNGSETGLKNAGQFLAFQGDAAKPQAVLLKHNGLHFEIQIDPSSPVGQTDAAGVKDVLMEAALTTIMDCEDSVAAVDADDKVVIYRNWLGLMKGDLAEEVSKGGSTFTRTMNPDRVYTRADGSELTLHGRSLLFVRNVGHLMTNDAILDKDGNEVPEGIQDGLFTSLIAIHDLNGNTSRKNSRTGSVYIVKPKMHGPEEAAFTNELFGRVEDVLGLPRNTLKVGIMDEERRTTVNLKACIKAAKDRVVFINTGFLDRTGDEIHTSMEAGAVVRKGAMKSEKWIGAYENNNVDVGLATGLQGKAQIGKGMWAMPDLMAAMLEQKIGHPLAGANTAWVPSPTAATLHALHYHKVDVFARQAELAKRTPASVDDILTIPLAPNTNWTAEEIKNEVDNNAQGILGYVVRWIDQGVGCSKVPDINDVGLMEDRATLRISSQLLANWLRHGVISQEQVVESLKRMAVVVDRQNASDPSYRPMAPNFDDNVAFQAALELVVEGTRQPNGYTEPVLHRRRREFKAKNGL</sequence>
<feature type="chain" id="PRO_1000056918" description="Malate synthase G">
    <location>
        <begin position="1"/>
        <end position="725"/>
    </location>
</feature>
<feature type="active site" description="Proton acceptor" evidence="1">
    <location>
        <position position="340"/>
    </location>
</feature>
<feature type="active site" description="Proton donor" evidence="1">
    <location>
        <position position="631"/>
    </location>
</feature>
<feature type="binding site" evidence="1">
    <location>
        <position position="118"/>
    </location>
    <ligand>
        <name>acetyl-CoA</name>
        <dbReference type="ChEBI" id="CHEBI:57288"/>
    </ligand>
</feature>
<feature type="binding site" evidence="1">
    <location>
        <begin position="125"/>
        <end position="126"/>
    </location>
    <ligand>
        <name>acetyl-CoA</name>
        <dbReference type="ChEBI" id="CHEBI:57288"/>
    </ligand>
</feature>
<feature type="binding site" evidence="1">
    <location>
        <position position="276"/>
    </location>
    <ligand>
        <name>acetyl-CoA</name>
        <dbReference type="ChEBI" id="CHEBI:57288"/>
    </ligand>
</feature>
<feature type="binding site" evidence="1">
    <location>
        <position position="313"/>
    </location>
    <ligand>
        <name>acetyl-CoA</name>
        <dbReference type="ChEBI" id="CHEBI:57288"/>
    </ligand>
</feature>
<feature type="binding site" evidence="1">
    <location>
        <position position="340"/>
    </location>
    <ligand>
        <name>glyoxylate</name>
        <dbReference type="ChEBI" id="CHEBI:36655"/>
    </ligand>
</feature>
<feature type="binding site" evidence="1">
    <location>
        <position position="432"/>
    </location>
    <ligand>
        <name>glyoxylate</name>
        <dbReference type="ChEBI" id="CHEBI:36655"/>
    </ligand>
</feature>
<feature type="binding site" evidence="1">
    <location>
        <position position="432"/>
    </location>
    <ligand>
        <name>Mg(2+)</name>
        <dbReference type="ChEBI" id="CHEBI:18420"/>
    </ligand>
</feature>
<feature type="binding site" evidence="1">
    <location>
        <begin position="457"/>
        <end position="460"/>
    </location>
    <ligand>
        <name>glyoxylate</name>
        <dbReference type="ChEBI" id="CHEBI:36655"/>
    </ligand>
</feature>
<feature type="binding site" evidence="1">
    <location>
        <position position="460"/>
    </location>
    <ligand>
        <name>Mg(2+)</name>
        <dbReference type="ChEBI" id="CHEBI:18420"/>
    </ligand>
</feature>
<feature type="binding site" evidence="1">
    <location>
        <position position="541"/>
    </location>
    <ligand>
        <name>acetyl-CoA</name>
        <dbReference type="ChEBI" id="CHEBI:57288"/>
    </ligand>
</feature>
<feature type="modified residue" description="Cysteine sulfenic acid (-SOH)" evidence="1">
    <location>
        <position position="617"/>
    </location>
</feature>
<name>MASZ_PSEAB</name>
<accession>Q02TT1</accession>
<protein>
    <recommendedName>
        <fullName evidence="1">Malate synthase G</fullName>
        <ecNumber evidence="1">2.3.3.9</ecNumber>
    </recommendedName>
</protein>
<gene>
    <name evidence="1" type="primary">glcB</name>
    <name type="ordered locus">PA14_06290</name>
</gene>
<reference key="1">
    <citation type="journal article" date="2006" name="Genome Biol.">
        <title>Genomic analysis reveals that Pseudomonas aeruginosa virulence is combinatorial.</title>
        <authorList>
            <person name="Lee D.G."/>
            <person name="Urbach J.M."/>
            <person name="Wu G."/>
            <person name="Liberati N.T."/>
            <person name="Feinbaum R.L."/>
            <person name="Miyata S."/>
            <person name="Diggins L.T."/>
            <person name="He J."/>
            <person name="Saucier M."/>
            <person name="Deziel E."/>
            <person name="Friedman L."/>
            <person name="Li L."/>
            <person name="Grills G."/>
            <person name="Montgomery K."/>
            <person name="Kucherlapati R."/>
            <person name="Rahme L.G."/>
            <person name="Ausubel F.M."/>
        </authorList>
    </citation>
    <scope>NUCLEOTIDE SEQUENCE [LARGE SCALE GENOMIC DNA]</scope>
    <source>
        <strain>UCBPP-PA14</strain>
    </source>
</reference>